<comment type="catalytic activity">
    <reaction evidence="1">
        <text>D-arabinose 5-phosphate + phosphoenolpyruvate + H2O = 3-deoxy-alpha-D-manno-2-octulosonate-8-phosphate + phosphate</text>
        <dbReference type="Rhea" id="RHEA:14053"/>
        <dbReference type="ChEBI" id="CHEBI:15377"/>
        <dbReference type="ChEBI" id="CHEBI:43474"/>
        <dbReference type="ChEBI" id="CHEBI:57693"/>
        <dbReference type="ChEBI" id="CHEBI:58702"/>
        <dbReference type="ChEBI" id="CHEBI:85985"/>
        <dbReference type="EC" id="2.5.1.55"/>
    </reaction>
</comment>
<comment type="pathway">
    <text evidence="1">Carbohydrate biosynthesis; 3-deoxy-D-manno-octulosonate biosynthesis; 3-deoxy-D-manno-octulosonate from D-ribulose 5-phosphate: step 2/3.</text>
</comment>
<comment type="pathway">
    <text evidence="1">Bacterial outer membrane biogenesis; lipopolysaccharide biosynthesis.</text>
</comment>
<comment type="subcellular location">
    <subcellularLocation>
        <location evidence="1">Cytoplasm</location>
    </subcellularLocation>
</comment>
<comment type="similarity">
    <text evidence="1">Belongs to the KdsA family.</text>
</comment>
<evidence type="ECO:0000255" key="1">
    <source>
        <dbReference type="HAMAP-Rule" id="MF_00056"/>
    </source>
</evidence>
<protein>
    <recommendedName>
        <fullName evidence="1">2-dehydro-3-deoxyphosphooctonate aldolase</fullName>
        <ecNumber evidence="1">2.5.1.55</ecNumber>
    </recommendedName>
    <alternativeName>
        <fullName evidence="1">3-deoxy-D-manno-octulosonic acid 8-phosphate synthase</fullName>
    </alternativeName>
    <alternativeName>
        <fullName evidence="1">KDO-8-phosphate synthase</fullName>
        <shortName evidence="1">KDO 8-P synthase</shortName>
        <shortName evidence="1">KDOPS</shortName>
    </alternativeName>
    <alternativeName>
        <fullName evidence="1">Phospho-2-dehydro-3-deoxyoctonate aldolase</fullName>
    </alternativeName>
</protein>
<sequence>MNLAGFEVGLDKPFFLIAGTCVVESEQMTIDTAGRLKEICATLGVPFIYKSSYDKANRSSGKSFRGLGMDEGLRILAEVKRQLNVPVLTDVHEIDEIAPVAAVVDVLQTPAFLCRQTDFIRACAQSGKPVNIKKGQFLAPHDMKNVIDKARDAARDAGLSEDRFMACERGVSFGYNNLVSDMRSLAIMRETGAPVVFDATHSVQLPGGQGTSSGGQREFVPVLARAALATGVAGLFMETHPNPAEAKSDGPNAVPLGRMAALLETLVTLDRAVKRVPFLENDFN</sequence>
<proteinExistence type="inferred from homology"/>
<organism>
    <name type="scientific">Burkholderia mallei (strain SAVP1)</name>
    <dbReference type="NCBI Taxonomy" id="320388"/>
    <lineage>
        <taxon>Bacteria</taxon>
        <taxon>Pseudomonadati</taxon>
        <taxon>Pseudomonadota</taxon>
        <taxon>Betaproteobacteria</taxon>
        <taxon>Burkholderiales</taxon>
        <taxon>Burkholderiaceae</taxon>
        <taxon>Burkholderia</taxon>
        <taxon>pseudomallei group</taxon>
    </lineage>
</organism>
<keyword id="KW-0963">Cytoplasm</keyword>
<keyword id="KW-0448">Lipopolysaccharide biosynthesis</keyword>
<keyword id="KW-0808">Transferase</keyword>
<dbReference type="EC" id="2.5.1.55" evidence="1"/>
<dbReference type="EMBL" id="CP000526">
    <property type="protein sequence ID" value="ABM51932.1"/>
    <property type="molecule type" value="Genomic_DNA"/>
</dbReference>
<dbReference type="RefSeq" id="WP_004193658.1">
    <property type="nucleotide sequence ID" value="NC_008785.1"/>
</dbReference>
<dbReference type="SMR" id="A1V5K3"/>
<dbReference type="GeneID" id="93060828"/>
<dbReference type="KEGG" id="bmv:BMASAVP1_A2194"/>
<dbReference type="HOGENOM" id="CLU_036666_0_0_4"/>
<dbReference type="UniPathway" id="UPA00030"/>
<dbReference type="UniPathway" id="UPA00357">
    <property type="reaction ID" value="UER00474"/>
</dbReference>
<dbReference type="GO" id="GO:0005737">
    <property type="term" value="C:cytoplasm"/>
    <property type="evidence" value="ECO:0007669"/>
    <property type="project" value="UniProtKB-SubCell"/>
</dbReference>
<dbReference type="GO" id="GO:0008676">
    <property type="term" value="F:3-deoxy-8-phosphooctulonate synthase activity"/>
    <property type="evidence" value="ECO:0007669"/>
    <property type="project" value="UniProtKB-UniRule"/>
</dbReference>
<dbReference type="GO" id="GO:0019294">
    <property type="term" value="P:keto-3-deoxy-D-manno-octulosonic acid biosynthetic process"/>
    <property type="evidence" value="ECO:0007669"/>
    <property type="project" value="UniProtKB-UniRule"/>
</dbReference>
<dbReference type="Gene3D" id="3.20.20.70">
    <property type="entry name" value="Aldolase class I"/>
    <property type="match status" value="1"/>
</dbReference>
<dbReference type="HAMAP" id="MF_00056">
    <property type="entry name" value="KDO8P_synth"/>
    <property type="match status" value="1"/>
</dbReference>
<dbReference type="InterPro" id="IPR013785">
    <property type="entry name" value="Aldolase_TIM"/>
</dbReference>
<dbReference type="InterPro" id="IPR006218">
    <property type="entry name" value="DAHP1/KDSA"/>
</dbReference>
<dbReference type="InterPro" id="IPR006269">
    <property type="entry name" value="KDO8P_synthase"/>
</dbReference>
<dbReference type="NCBIfam" id="TIGR01362">
    <property type="entry name" value="KDO8P_synth"/>
    <property type="match status" value="1"/>
</dbReference>
<dbReference type="NCBIfam" id="NF003543">
    <property type="entry name" value="PRK05198.1"/>
    <property type="match status" value="1"/>
</dbReference>
<dbReference type="PANTHER" id="PTHR21057">
    <property type="entry name" value="PHOSPHO-2-DEHYDRO-3-DEOXYHEPTONATE ALDOLASE"/>
    <property type="match status" value="1"/>
</dbReference>
<dbReference type="Pfam" id="PF00793">
    <property type="entry name" value="DAHP_synth_1"/>
    <property type="match status" value="1"/>
</dbReference>
<dbReference type="SUPFAM" id="SSF51569">
    <property type="entry name" value="Aldolase"/>
    <property type="match status" value="1"/>
</dbReference>
<feature type="chain" id="PRO_1000003330" description="2-dehydro-3-deoxyphosphooctonate aldolase">
    <location>
        <begin position="1"/>
        <end position="284"/>
    </location>
</feature>
<reference key="1">
    <citation type="journal article" date="2010" name="Genome Biol. Evol.">
        <title>Continuing evolution of Burkholderia mallei through genome reduction and large-scale rearrangements.</title>
        <authorList>
            <person name="Losada L."/>
            <person name="Ronning C.M."/>
            <person name="DeShazer D."/>
            <person name="Woods D."/>
            <person name="Fedorova N."/>
            <person name="Kim H.S."/>
            <person name="Shabalina S.A."/>
            <person name="Pearson T.R."/>
            <person name="Brinkac L."/>
            <person name="Tan P."/>
            <person name="Nandi T."/>
            <person name="Crabtree J."/>
            <person name="Badger J."/>
            <person name="Beckstrom-Sternberg S."/>
            <person name="Saqib M."/>
            <person name="Schutzer S.E."/>
            <person name="Keim P."/>
            <person name="Nierman W.C."/>
        </authorList>
    </citation>
    <scope>NUCLEOTIDE SEQUENCE [LARGE SCALE GENOMIC DNA]</scope>
    <source>
        <strain>SAVP1</strain>
    </source>
</reference>
<gene>
    <name evidence="1" type="primary">kdsA</name>
    <name type="ordered locus">BMASAVP1_A2194</name>
</gene>
<accession>A1V5K3</accession>
<name>KDSA_BURMS</name>